<proteinExistence type="inferred from homology"/>
<name>Y630_STRU0</name>
<dbReference type="EMBL" id="AM946015">
    <property type="protein sequence ID" value="CAR41471.1"/>
    <property type="molecule type" value="Genomic_DNA"/>
</dbReference>
<dbReference type="RefSeq" id="WP_012658151.1">
    <property type="nucleotide sequence ID" value="NC_012004.1"/>
</dbReference>
<dbReference type="SMR" id="B9DRP5"/>
<dbReference type="STRING" id="218495.SUB0630"/>
<dbReference type="KEGG" id="sub:SUB0630"/>
<dbReference type="eggNOG" id="COG1660">
    <property type="taxonomic scope" value="Bacteria"/>
</dbReference>
<dbReference type="HOGENOM" id="CLU_059558_0_0_9"/>
<dbReference type="OrthoDB" id="9784461at2"/>
<dbReference type="Proteomes" id="UP000000449">
    <property type="component" value="Chromosome"/>
</dbReference>
<dbReference type="GO" id="GO:0005524">
    <property type="term" value="F:ATP binding"/>
    <property type="evidence" value="ECO:0007669"/>
    <property type="project" value="UniProtKB-UniRule"/>
</dbReference>
<dbReference type="GO" id="GO:0005525">
    <property type="term" value="F:GTP binding"/>
    <property type="evidence" value="ECO:0007669"/>
    <property type="project" value="UniProtKB-UniRule"/>
</dbReference>
<dbReference type="Gene3D" id="3.40.50.300">
    <property type="entry name" value="P-loop containing nucleotide triphosphate hydrolases"/>
    <property type="match status" value="1"/>
</dbReference>
<dbReference type="HAMAP" id="MF_00636">
    <property type="entry name" value="RapZ_like"/>
    <property type="match status" value="1"/>
</dbReference>
<dbReference type="InterPro" id="IPR027417">
    <property type="entry name" value="P-loop_NTPase"/>
</dbReference>
<dbReference type="InterPro" id="IPR005337">
    <property type="entry name" value="RapZ-like"/>
</dbReference>
<dbReference type="InterPro" id="IPR053930">
    <property type="entry name" value="RapZ-like_N"/>
</dbReference>
<dbReference type="InterPro" id="IPR053931">
    <property type="entry name" value="RapZ_C"/>
</dbReference>
<dbReference type="NCBIfam" id="NF003828">
    <property type="entry name" value="PRK05416.1"/>
    <property type="match status" value="1"/>
</dbReference>
<dbReference type="PANTHER" id="PTHR30448">
    <property type="entry name" value="RNASE ADAPTER PROTEIN RAPZ"/>
    <property type="match status" value="1"/>
</dbReference>
<dbReference type="PANTHER" id="PTHR30448:SF0">
    <property type="entry name" value="RNASE ADAPTER PROTEIN RAPZ"/>
    <property type="match status" value="1"/>
</dbReference>
<dbReference type="Pfam" id="PF22740">
    <property type="entry name" value="PapZ_C"/>
    <property type="match status" value="1"/>
</dbReference>
<dbReference type="Pfam" id="PF03668">
    <property type="entry name" value="RapZ-like_N"/>
    <property type="match status" value="1"/>
</dbReference>
<dbReference type="PIRSF" id="PIRSF005052">
    <property type="entry name" value="P-loopkin"/>
    <property type="match status" value="1"/>
</dbReference>
<dbReference type="SUPFAM" id="SSF52540">
    <property type="entry name" value="P-loop containing nucleoside triphosphate hydrolases"/>
    <property type="match status" value="1"/>
</dbReference>
<organism>
    <name type="scientific">Streptococcus uberis (strain ATCC BAA-854 / 0140J)</name>
    <dbReference type="NCBI Taxonomy" id="218495"/>
    <lineage>
        <taxon>Bacteria</taxon>
        <taxon>Bacillati</taxon>
        <taxon>Bacillota</taxon>
        <taxon>Bacilli</taxon>
        <taxon>Lactobacillales</taxon>
        <taxon>Streptococcaceae</taxon>
        <taxon>Streptococcus</taxon>
    </lineage>
</organism>
<comment type="function">
    <text evidence="1">Displays ATPase and GTPase activities.</text>
</comment>
<comment type="similarity">
    <text evidence="1">Belongs to the RapZ-like family.</text>
</comment>
<sequence>MSQKKIDLVIVTGMSGAGKTVAIQSFEDLGYFTIDNMPPTLVPKFLEIIEQNNDNKRVALVVDMRSRTFFKEITLILDQIEQNFAIDFRILFLDATDNELVSRYKETRRSHPLAADGRVMDGIKLERELLAPLKSMSQNVVDTSDLTPRQLRQVITEQFSSDSNSASFRVEVMSFGFKYGIPLDADLVFDVRFLPNPYYLPELREKTGLDQEVYDYVMKHQESNDFYKHLVELILPILPGYQKEGKSLLTIAIGCTGGQHRSVAFAHRLAETVKKDWPVNESHRDKDKRKETVNRS</sequence>
<feature type="chain" id="PRO_1000147371" description="Nucleotide-binding protein SUB0630">
    <location>
        <begin position="1"/>
        <end position="296"/>
    </location>
</feature>
<feature type="binding site" evidence="1">
    <location>
        <begin position="13"/>
        <end position="20"/>
    </location>
    <ligand>
        <name>ATP</name>
        <dbReference type="ChEBI" id="CHEBI:30616"/>
    </ligand>
</feature>
<feature type="binding site" evidence="1">
    <location>
        <begin position="63"/>
        <end position="66"/>
    </location>
    <ligand>
        <name>GTP</name>
        <dbReference type="ChEBI" id="CHEBI:37565"/>
    </ligand>
</feature>
<gene>
    <name type="ordered locus">SUB0630</name>
</gene>
<reference key="1">
    <citation type="journal article" date="2009" name="BMC Genomics">
        <title>Evidence for niche adaptation in the genome of the bovine pathogen Streptococcus uberis.</title>
        <authorList>
            <person name="Ward P.N."/>
            <person name="Holden M.T.G."/>
            <person name="Leigh J.A."/>
            <person name="Lennard N."/>
            <person name="Bignell A."/>
            <person name="Barron A."/>
            <person name="Clark L."/>
            <person name="Quail M.A."/>
            <person name="Woodward J."/>
            <person name="Barrell B.G."/>
            <person name="Egan S.A."/>
            <person name="Field T.R."/>
            <person name="Maskell D."/>
            <person name="Kehoe M."/>
            <person name="Dowson C.G."/>
            <person name="Chanter N."/>
            <person name="Whatmore A.M."/>
            <person name="Bentley S.D."/>
            <person name="Parkhill J."/>
        </authorList>
    </citation>
    <scope>NUCLEOTIDE SEQUENCE [LARGE SCALE GENOMIC DNA]</scope>
    <source>
        <strain>ATCC BAA-854 / 0140J</strain>
    </source>
</reference>
<accession>B9DRP5</accession>
<protein>
    <recommendedName>
        <fullName evidence="1">Nucleotide-binding protein SUB0630</fullName>
    </recommendedName>
</protein>
<keyword id="KW-0067">ATP-binding</keyword>
<keyword id="KW-0342">GTP-binding</keyword>
<keyword id="KW-0547">Nucleotide-binding</keyword>
<keyword id="KW-1185">Reference proteome</keyword>
<evidence type="ECO:0000255" key="1">
    <source>
        <dbReference type="HAMAP-Rule" id="MF_00636"/>
    </source>
</evidence>